<feature type="chain" id="PRO_0000105833" description="Bowman-birk type proteinase inhibitor">
    <location>
        <begin position="1"/>
        <end position="63"/>
    </location>
</feature>
<feature type="site" description="Reactive bond for trypsin" evidence="2">
    <location>
        <begin position="14"/>
        <end position="15"/>
    </location>
</feature>
<feature type="site" description="Reactive bond for chymotrypsin" evidence="2">
    <location>
        <begin position="41"/>
        <end position="42"/>
    </location>
</feature>
<feature type="disulfide bond" evidence="1">
    <location>
        <begin position="7"/>
        <end position="61"/>
    </location>
</feature>
<feature type="disulfide bond" evidence="1">
    <location>
        <begin position="8"/>
        <end position="23"/>
    </location>
</feature>
<feature type="disulfide bond" evidence="1">
    <location>
        <begin position="11"/>
        <end position="57"/>
    </location>
</feature>
<feature type="disulfide bond" evidence="1">
    <location>
        <begin position="13"/>
        <end position="21"/>
    </location>
</feature>
<feature type="disulfide bond" evidence="1">
    <location>
        <begin position="31"/>
        <end position="38"/>
    </location>
</feature>
<feature type="disulfide bond" evidence="1">
    <location>
        <begin position="35"/>
        <end position="50"/>
    </location>
</feature>
<feature type="disulfide bond" evidence="1">
    <location>
        <begin position="40"/>
        <end position="48"/>
    </location>
</feature>
<sequence length="63" mass="6916">SSKWEACCDRCACTKSIPPQCHCADIRLNSCHSACESCACTRSIPAKCRCFDITDFCYKPCSG</sequence>
<proteinExistence type="evidence at protein level"/>
<evidence type="ECO:0000250" key="1">
    <source>
        <dbReference type="UniProtKB" id="P80321"/>
    </source>
</evidence>
<evidence type="ECO:0000255" key="2"/>
<evidence type="ECO:0000269" key="3">
    <source>
    </source>
</evidence>
<evidence type="ECO:0000305" key="4"/>
<accession>P83284</accession>
<reference evidence="4" key="1">
    <citation type="journal article" date="1996" name="J. Protein Chem.">
        <title>Sequence of a new Bowman-Birk inhibitor from Torresea acreana seeds and comparison with Torresea cearensis trypsin inhibitor (TcTI2).</title>
        <authorList>
            <person name="Tanaka A.S."/>
            <person name="Sampaio M.U."/>
            <person name="Mentele R."/>
            <person name="Auerswald E.A."/>
            <person name="Sampaio C.A.M."/>
        </authorList>
    </citation>
    <scope>PROTEIN SEQUENCE</scope>
    <scope>FUNCTION</scope>
    <scope>MASS SPECTROMETRY</scope>
    <source>
        <tissue>Seed</tissue>
    </source>
</reference>
<organism evidence="4">
    <name type="scientific">Amburana acreana</name>
    <name type="common">Cerejeira</name>
    <name type="synonym">Torresea acreana</name>
    <dbReference type="NCBI Taxonomy" id="187148"/>
    <lineage>
        <taxon>Eukaryota</taxon>
        <taxon>Viridiplantae</taxon>
        <taxon>Streptophyta</taxon>
        <taxon>Embryophyta</taxon>
        <taxon>Tracheophyta</taxon>
        <taxon>Spermatophyta</taxon>
        <taxon>Magnoliopsida</taxon>
        <taxon>eudicotyledons</taxon>
        <taxon>Gunneridae</taxon>
        <taxon>Pentapetalae</taxon>
        <taxon>rosids</taxon>
        <taxon>fabids</taxon>
        <taxon>Fabales</taxon>
        <taxon>Fabaceae</taxon>
        <taxon>Papilionoideae</taxon>
        <taxon>ADA clade</taxon>
        <taxon>Amburaneae</taxon>
        <taxon>Amburana</taxon>
    </lineage>
</organism>
<dbReference type="SMR" id="P83284"/>
<dbReference type="MEROPS" id="I12.001"/>
<dbReference type="GO" id="GO:0005576">
    <property type="term" value="C:extracellular region"/>
    <property type="evidence" value="ECO:0007669"/>
    <property type="project" value="InterPro"/>
</dbReference>
<dbReference type="GO" id="GO:0004867">
    <property type="term" value="F:serine-type endopeptidase inhibitor activity"/>
    <property type="evidence" value="ECO:0000314"/>
    <property type="project" value="UniProtKB"/>
</dbReference>
<dbReference type="CDD" id="cd00023">
    <property type="entry name" value="BBI"/>
    <property type="match status" value="1"/>
</dbReference>
<dbReference type="FunFam" id="2.10.69.10:FF:000001">
    <property type="entry name" value="Bowman-Birk type proteinase inhibitor"/>
    <property type="match status" value="1"/>
</dbReference>
<dbReference type="Gene3D" id="2.10.69.10">
    <property type="entry name" value="Cysteine Protease (Bromelain) Inhibitor, subunit H"/>
    <property type="match status" value="1"/>
</dbReference>
<dbReference type="InterPro" id="IPR035995">
    <property type="entry name" value="Bowman-Birk_prot_inh"/>
</dbReference>
<dbReference type="InterPro" id="IPR000877">
    <property type="entry name" value="Prot_inh_BBI"/>
</dbReference>
<dbReference type="Pfam" id="PF00228">
    <property type="entry name" value="Bowman-Birk_leg"/>
    <property type="match status" value="2"/>
</dbReference>
<dbReference type="SMART" id="SM00269">
    <property type="entry name" value="BowB"/>
    <property type="match status" value="1"/>
</dbReference>
<dbReference type="SUPFAM" id="SSF57247">
    <property type="entry name" value="Bowman-Birk inhibitor, BBI"/>
    <property type="match status" value="1"/>
</dbReference>
<dbReference type="PROSITE" id="PS00281">
    <property type="entry name" value="BOWMAN_BIRK"/>
    <property type="match status" value="1"/>
</dbReference>
<keyword id="KW-0903">Direct protein sequencing</keyword>
<keyword id="KW-1015">Disulfide bond</keyword>
<keyword id="KW-0646">Protease inhibitor</keyword>
<keyword id="KW-0722">Serine protease inhibitor</keyword>
<comment type="function">
    <text evidence="3">Inhibits trypsin, chymotrypsin, plasmin and factor XIIa. Does not inhibit factor Xa, thrombin and plasma kallikrein.</text>
</comment>
<comment type="mass spectrometry" mass="8388.0" method="Electrospray" evidence="3"/>
<comment type="similarity">
    <text evidence="4">Belongs to the Bowman-Birk serine protease inhibitor family.</text>
</comment>
<protein>
    <recommendedName>
        <fullName>Bowman-birk type proteinase inhibitor</fullName>
    </recommendedName>
    <alternativeName>
        <fullName>TaTI</fullName>
    </alternativeName>
</protein>
<name>IBB1_AMBAC</name>